<feature type="chain" id="PRO_1000024824" description="Ribonuclease PH">
    <location>
        <begin position="1"/>
        <end position="238"/>
    </location>
</feature>
<feature type="binding site" evidence="1">
    <location>
        <position position="86"/>
    </location>
    <ligand>
        <name>phosphate</name>
        <dbReference type="ChEBI" id="CHEBI:43474"/>
        <note>substrate</note>
    </ligand>
</feature>
<feature type="binding site" evidence="1">
    <location>
        <begin position="124"/>
        <end position="126"/>
    </location>
    <ligand>
        <name>phosphate</name>
        <dbReference type="ChEBI" id="CHEBI:43474"/>
        <note>substrate</note>
    </ligand>
</feature>
<evidence type="ECO:0000255" key="1">
    <source>
        <dbReference type="HAMAP-Rule" id="MF_00564"/>
    </source>
</evidence>
<name>RNPH_MARMM</name>
<proteinExistence type="inferred from homology"/>
<dbReference type="EC" id="2.7.7.56" evidence="1"/>
<dbReference type="EMBL" id="CP000449">
    <property type="protein sequence ID" value="ABI67287.1"/>
    <property type="molecule type" value="Genomic_DNA"/>
</dbReference>
<dbReference type="RefSeq" id="WP_011644931.1">
    <property type="nucleotide sequence ID" value="NC_008347.1"/>
</dbReference>
<dbReference type="SMR" id="Q0AKA6"/>
<dbReference type="STRING" id="394221.Mmar10_3006"/>
<dbReference type="KEGG" id="mmr:Mmar10_3006"/>
<dbReference type="eggNOG" id="COG0689">
    <property type="taxonomic scope" value="Bacteria"/>
</dbReference>
<dbReference type="HOGENOM" id="CLU_050858_0_0_5"/>
<dbReference type="OrthoDB" id="9802265at2"/>
<dbReference type="Proteomes" id="UP000001964">
    <property type="component" value="Chromosome"/>
</dbReference>
<dbReference type="GO" id="GO:0000175">
    <property type="term" value="F:3'-5'-RNA exonuclease activity"/>
    <property type="evidence" value="ECO:0007669"/>
    <property type="project" value="UniProtKB-UniRule"/>
</dbReference>
<dbReference type="GO" id="GO:0000049">
    <property type="term" value="F:tRNA binding"/>
    <property type="evidence" value="ECO:0007669"/>
    <property type="project" value="UniProtKB-UniRule"/>
</dbReference>
<dbReference type="GO" id="GO:0009022">
    <property type="term" value="F:tRNA nucleotidyltransferase activity"/>
    <property type="evidence" value="ECO:0007669"/>
    <property type="project" value="UniProtKB-UniRule"/>
</dbReference>
<dbReference type="GO" id="GO:0016075">
    <property type="term" value="P:rRNA catabolic process"/>
    <property type="evidence" value="ECO:0007669"/>
    <property type="project" value="UniProtKB-UniRule"/>
</dbReference>
<dbReference type="GO" id="GO:0006364">
    <property type="term" value="P:rRNA processing"/>
    <property type="evidence" value="ECO:0007669"/>
    <property type="project" value="UniProtKB-KW"/>
</dbReference>
<dbReference type="GO" id="GO:0008033">
    <property type="term" value="P:tRNA processing"/>
    <property type="evidence" value="ECO:0007669"/>
    <property type="project" value="UniProtKB-UniRule"/>
</dbReference>
<dbReference type="CDD" id="cd11362">
    <property type="entry name" value="RNase_PH_bact"/>
    <property type="match status" value="1"/>
</dbReference>
<dbReference type="FunFam" id="3.30.230.70:FF:000003">
    <property type="entry name" value="Ribonuclease PH"/>
    <property type="match status" value="1"/>
</dbReference>
<dbReference type="Gene3D" id="3.30.230.70">
    <property type="entry name" value="GHMP Kinase, N-terminal domain"/>
    <property type="match status" value="1"/>
</dbReference>
<dbReference type="HAMAP" id="MF_00564">
    <property type="entry name" value="RNase_PH"/>
    <property type="match status" value="1"/>
</dbReference>
<dbReference type="InterPro" id="IPR001247">
    <property type="entry name" value="ExoRNase_PH_dom1"/>
</dbReference>
<dbReference type="InterPro" id="IPR015847">
    <property type="entry name" value="ExoRNase_PH_dom2"/>
</dbReference>
<dbReference type="InterPro" id="IPR036345">
    <property type="entry name" value="ExoRNase_PH_dom2_sf"/>
</dbReference>
<dbReference type="InterPro" id="IPR027408">
    <property type="entry name" value="PNPase/RNase_PH_dom_sf"/>
</dbReference>
<dbReference type="InterPro" id="IPR020568">
    <property type="entry name" value="Ribosomal_Su5_D2-typ_SF"/>
</dbReference>
<dbReference type="InterPro" id="IPR050080">
    <property type="entry name" value="RNase_PH"/>
</dbReference>
<dbReference type="InterPro" id="IPR002381">
    <property type="entry name" value="RNase_PH_bac-type"/>
</dbReference>
<dbReference type="InterPro" id="IPR018336">
    <property type="entry name" value="RNase_PH_CS"/>
</dbReference>
<dbReference type="NCBIfam" id="TIGR01966">
    <property type="entry name" value="RNasePH"/>
    <property type="match status" value="1"/>
</dbReference>
<dbReference type="PANTHER" id="PTHR11953">
    <property type="entry name" value="EXOSOME COMPLEX COMPONENT"/>
    <property type="match status" value="1"/>
</dbReference>
<dbReference type="PANTHER" id="PTHR11953:SF0">
    <property type="entry name" value="EXOSOME COMPLEX COMPONENT RRP41"/>
    <property type="match status" value="1"/>
</dbReference>
<dbReference type="Pfam" id="PF01138">
    <property type="entry name" value="RNase_PH"/>
    <property type="match status" value="1"/>
</dbReference>
<dbReference type="Pfam" id="PF03725">
    <property type="entry name" value="RNase_PH_C"/>
    <property type="match status" value="1"/>
</dbReference>
<dbReference type="SUPFAM" id="SSF55666">
    <property type="entry name" value="Ribonuclease PH domain 2-like"/>
    <property type="match status" value="1"/>
</dbReference>
<dbReference type="SUPFAM" id="SSF54211">
    <property type="entry name" value="Ribosomal protein S5 domain 2-like"/>
    <property type="match status" value="1"/>
</dbReference>
<dbReference type="PROSITE" id="PS01277">
    <property type="entry name" value="RIBONUCLEASE_PH"/>
    <property type="match status" value="1"/>
</dbReference>
<sequence>MRPHGRARDAMREIKLEAGVSVYAEGSCLARFGGTHVLCTASIEESVPPWMRGGGKGWVTAEYGMLPRATHTRSRREATAGKQSGRTQEIQRLIGRSLRAVVDLKALGERQITIDCDVLQADGGTRTAAITGAWVALKQATGYLIEEGLLTSDPVHGQLAAISCGVIDGETRLDLEYEEDRRAEADANFVLTDTGGIVEIQATAEDKPIPETDFDLLFALAKAGVVDLCEAQLAALKG</sequence>
<gene>
    <name evidence="1" type="primary">rph</name>
    <name type="ordered locus">Mmar10_3006</name>
</gene>
<keyword id="KW-0548">Nucleotidyltransferase</keyword>
<keyword id="KW-1185">Reference proteome</keyword>
<keyword id="KW-0694">RNA-binding</keyword>
<keyword id="KW-0698">rRNA processing</keyword>
<keyword id="KW-0808">Transferase</keyword>
<keyword id="KW-0819">tRNA processing</keyword>
<keyword id="KW-0820">tRNA-binding</keyword>
<accession>Q0AKA6</accession>
<protein>
    <recommendedName>
        <fullName evidence="1">Ribonuclease PH</fullName>
        <shortName evidence="1">RNase PH</shortName>
        <ecNumber evidence="1">2.7.7.56</ecNumber>
    </recommendedName>
    <alternativeName>
        <fullName evidence="1">tRNA nucleotidyltransferase</fullName>
    </alternativeName>
</protein>
<reference key="1">
    <citation type="submission" date="2006-08" db="EMBL/GenBank/DDBJ databases">
        <title>Complete sequence of Maricaulis maris MCS10.</title>
        <authorList>
            <consortium name="US DOE Joint Genome Institute"/>
            <person name="Copeland A."/>
            <person name="Lucas S."/>
            <person name="Lapidus A."/>
            <person name="Barry K."/>
            <person name="Detter J.C."/>
            <person name="Glavina del Rio T."/>
            <person name="Hammon N."/>
            <person name="Israni S."/>
            <person name="Dalin E."/>
            <person name="Tice H."/>
            <person name="Pitluck S."/>
            <person name="Saunders E."/>
            <person name="Brettin T."/>
            <person name="Bruce D."/>
            <person name="Han C."/>
            <person name="Tapia R."/>
            <person name="Gilna P."/>
            <person name="Schmutz J."/>
            <person name="Larimer F."/>
            <person name="Land M."/>
            <person name="Hauser L."/>
            <person name="Kyrpides N."/>
            <person name="Mikhailova N."/>
            <person name="Viollier P."/>
            <person name="Stephens C."/>
            <person name="Richardson P."/>
        </authorList>
    </citation>
    <scope>NUCLEOTIDE SEQUENCE [LARGE SCALE GENOMIC DNA]</scope>
    <source>
        <strain>MCS10</strain>
    </source>
</reference>
<organism>
    <name type="scientific">Maricaulis maris (strain MCS10)</name>
    <name type="common">Caulobacter maris</name>
    <dbReference type="NCBI Taxonomy" id="394221"/>
    <lineage>
        <taxon>Bacteria</taxon>
        <taxon>Pseudomonadati</taxon>
        <taxon>Pseudomonadota</taxon>
        <taxon>Alphaproteobacteria</taxon>
        <taxon>Maricaulales</taxon>
        <taxon>Maricaulaceae</taxon>
        <taxon>Maricaulis</taxon>
    </lineage>
</organism>
<comment type="function">
    <text evidence="1">Phosphorolytic 3'-5' exoribonuclease that plays an important role in tRNA 3'-end maturation. Removes nucleotide residues following the 3'-CCA terminus of tRNAs; can also add nucleotides to the ends of RNA molecules by using nucleoside diphosphates as substrates, but this may not be physiologically important. Probably plays a role in initiation of 16S rRNA degradation (leading to ribosome degradation) during starvation.</text>
</comment>
<comment type="catalytic activity">
    <reaction evidence="1">
        <text>tRNA(n+1) + phosphate = tRNA(n) + a ribonucleoside 5'-diphosphate</text>
        <dbReference type="Rhea" id="RHEA:10628"/>
        <dbReference type="Rhea" id="RHEA-COMP:17343"/>
        <dbReference type="Rhea" id="RHEA-COMP:17344"/>
        <dbReference type="ChEBI" id="CHEBI:43474"/>
        <dbReference type="ChEBI" id="CHEBI:57930"/>
        <dbReference type="ChEBI" id="CHEBI:173114"/>
        <dbReference type="EC" id="2.7.7.56"/>
    </reaction>
</comment>
<comment type="subunit">
    <text evidence="1">Homohexameric ring arranged as a trimer of dimers.</text>
</comment>
<comment type="similarity">
    <text evidence="1">Belongs to the RNase PH family.</text>
</comment>